<feature type="chain" id="PRO_0000117805" description="NADH-ubiquinone oxidoreductase chain 3">
    <location>
        <begin position="1"/>
        <end position="115"/>
    </location>
</feature>
<feature type="transmembrane region" description="Helical" evidence="3">
    <location>
        <begin position="3"/>
        <end position="23"/>
    </location>
</feature>
<feature type="transmembrane region" description="Helical" evidence="3">
    <location>
        <begin position="55"/>
        <end position="75"/>
    </location>
</feature>
<feature type="transmembrane region" description="Helical" evidence="3">
    <location>
        <begin position="86"/>
        <end position="106"/>
    </location>
</feature>
<feature type="helix" evidence="6">
    <location>
        <begin position="2"/>
        <end position="23"/>
    </location>
</feature>
<feature type="helix" evidence="7">
    <location>
        <begin position="24"/>
        <end position="26"/>
    </location>
</feature>
<feature type="helix" evidence="6">
    <location>
        <begin position="31"/>
        <end position="34"/>
    </location>
</feature>
<feature type="strand" evidence="5">
    <location>
        <begin position="39"/>
        <end position="41"/>
    </location>
</feature>
<feature type="helix" evidence="6">
    <location>
        <begin position="56"/>
        <end position="72"/>
    </location>
</feature>
<feature type="helix" evidence="6">
    <location>
        <begin position="75"/>
        <end position="78"/>
    </location>
</feature>
<feature type="strand" evidence="8">
    <location>
        <begin position="80"/>
        <end position="82"/>
    </location>
</feature>
<feature type="helix" evidence="6">
    <location>
        <begin position="84"/>
        <end position="107"/>
    </location>
</feature>
<feature type="turn" evidence="9">
    <location>
        <begin position="108"/>
        <end position="111"/>
    </location>
</feature>
<gene>
    <name evidence="1" type="primary">MT-ND3</name>
    <name type="synonym">MTND3</name>
    <name type="synonym">NADH3</name>
    <name type="synonym">ND3</name>
</gene>
<dbReference type="EC" id="7.1.1.2" evidence="1"/>
<dbReference type="EMBL" id="AJ002189">
    <property type="protein sequence ID" value="CAA05236.1"/>
    <property type="status" value="ALT_SEQ"/>
    <property type="molecule type" value="Genomic_DNA"/>
</dbReference>
<dbReference type="EMBL" id="AF034253">
    <property type="protein sequence ID" value="AAD34192.1"/>
    <property type="molecule type" value="Genomic_DNA"/>
</dbReference>
<dbReference type="PIR" id="T10979">
    <property type="entry name" value="T10979"/>
</dbReference>
<dbReference type="RefSeq" id="NP_008641.1">
    <property type="nucleotide sequence ID" value="NC_000845.1"/>
</dbReference>
<dbReference type="PDB" id="5GPN">
    <property type="method" value="EM"/>
    <property type="resolution" value="5.40 A"/>
    <property type="chains" value="g=1-115"/>
</dbReference>
<dbReference type="PDB" id="5GUP">
    <property type="method" value="EM"/>
    <property type="resolution" value="4.00 A"/>
    <property type="chains" value="j=1-115"/>
</dbReference>
<dbReference type="PDB" id="7V2C">
    <property type="method" value="EM"/>
    <property type="resolution" value="2.90 A"/>
    <property type="chains" value="j=1-115"/>
</dbReference>
<dbReference type="PDB" id="7V2D">
    <property type="method" value="EM"/>
    <property type="resolution" value="3.30 A"/>
    <property type="chains" value="j=1-113"/>
</dbReference>
<dbReference type="PDB" id="7V2E">
    <property type="method" value="EM"/>
    <property type="resolution" value="2.80 A"/>
    <property type="chains" value="j=1-115"/>
</dbReference>
<dbReference type="PDB" id="7V2F">
    <property type="method" value="EM"/>
    <property type="resolution" value="3.10 A"/>
    <property type="chains" value="j=1-113"/>
</dbReference>
<dbReference type="PDB" id="7V2H">
    <property type="method" value="EM"/>
    <property type="resolution" value="2.50 A"/>
    <property type="chains" value="j=1-115"/>
</dbReference>
<dbReference type="PDB" id="7V2K">
    <property type="method" value="EM"/>
    <property type="resolution" value="2.70 A"/>
    <property type="chains" value="j=1-113"/>
</dbReference>
<dbReference type="PDB" id="7V2R">
    <property type="method" value="EM"/>
    <property type="resolution" value="2.60 A"/>
    <property type="chains" value="j=1-115"/>
</dbReference>
<dbReference type="PDB" id="7V30">
    <property type="method" value="EM"/>
    <property type="resolution" value="2.70 A"/>
    <property type="chains" value="j=1-113"/>
</dbReference>
<dbReference type="PDB" id="7V31">
    <property type="method" value="EM"/>
    <property type="resolution" value="2.90 A"/>
    <property type="chains" value="j=1-115"/>
</dbReference>
<dbReference type="PDB" id="7V32">
    <property type="method" value="EM"/>
    <property type="resolution" value="3.20 A"/>
    <property type="chains" value="j=1-113"/>
</dbReference>
<dbReference type="PDB" id="7V33">
    <property type="method" value="EM"/>
    <property type="resolution" value="2.60 A"/>
    <property type="chains" value="j=1-115"/>
</dbReference>
<dbReference type="PDB" id="7V3M">
    <property type="method" value="EM"/>
    <property type="resolution" value="2.90 A"/>
    <property type="chains" value="j=1-113"/>
</dbReference>
<dbReference type="PDB" id="7VBL">
    <property type="method" value="EM"/>
    <property type="resolution" value="2.60 A"/>
    <property type="chains" value="j=1-115"/>
</dbReference>
<dbReference type="PDB" id="7VBP">
    <property type="method" value="EM"/>
    <property type="resolution" value="2.80 A"/>
    <property type="chains" value="j=1-113"/>
</dbReference>
<dbReference type="PDB" id="7VC0">
    <property type="method" value="EM"/>
    <property type="resolution" value="2.60 A"/>
    <property type="chains" value="j=1-115"/>
</dbReference>
<dbReference type="PDB" id="7VWL">
    <property type="method" value="EM"/>
    <property type="resolution" value="2.70 A"/>
    <property type="chains" value="j=1-113"/>
</dbReference>
<dbReference type="PDB" id="7VXS">
    <property type="method" value="EM"/>
    <property type="resolution" value="2.90 A"/>
    <property type="chains" value="j=1-115"/>
</dbReference>
<dbReference type="PDB" id="7VY1">
    <property type="method" value="EM"/>
    <property type="resolution" value="3.30 A"/>
    <property type="chains" value="j=1-113"/>
</dbReference>
<dbReference type="PDB" id="7VY9">
    <property type="method" value="EM"/>
    <property type="resolution" value="2.90 A"/>
    <property type="chains" value="j=1-115"/>
</dbReference>
<dbReference type="PDB" id="7VYE">
    <property type="method" value="EM"/>
    <property type="resolution" value="3.10 A"/>
    <property type="chains" value="j=1-113"/>
</dbReference>
<dbReference type="PDB" id="7VYG">
    <property type="method" value="EM"/>
    <property type="resolution" value="2.90 A"/>
    <property type="chains" value="j=1-115"/>
</dbReference>
<dbReference type="PDB" id="7VYI">
    <property type="method" value="EM"/>
    <property type="resolution" value="3.10 A"/>
    <property type="chains" value="j=1-113"/>
</dbReference>
<dbReference type="PDB" id="7VYS">
    <property type="method" value="EM"/>
    <property type="resolution" value="2.50 A"/>
    <property type="chains" value="j=1-115"/>
</dbReference>
<dbReference type="PDB" id="7VZ8">
    <property type="method" value="EM"/>
    <property type="resolution" value="2.70 A"/>
    <property type="chains" value="j=1-113"/>
</dbReference>
<dbReference type="PDB" id="7VZV">
    <property type="method" value="EM"/>
    <property type="resolution" value="3.20 A"/>
    <property type="chains" value="j=1-115"/>
</dbReference>
<dbReference type="PDB" id="7VZW">
    <property type="method" value="EM"/>
    <property type="resolution" value="3.20 A"/>
    <property type="chains" value="j=1-115"/>
</dbReference>
<dbReference type="PDB" id="7W00">
    <property type="method" value="EM"/>
    <property type="resolution" value="3.50 A"/>
    <property type="chains" value="j=1-113"/>
</dbReference>
<dbReference type="PDB" id="7W0H">
    <property type="method" value="EM"/>
    <property type="resolution" value="3.40 A"/>
    <property type="chains" value="j=1-113"/>
</dbReference>
<dbReference type="PDB" id="7W0R">
    <property type="method" value="EM"/>
    <property type="resolution" value="2.80 A"/>
    <property type="chains" value="j=1-115"/>
</dbReference>
<dbReference type="PDB" id="7W0Y">
    <property type="method" value="EM"/>
    <property type="resolution" value="3.40 A"/>
    <property type="chains" value="j=1-115"/>
</dbReference>
<dbReference type="PDB" id="7W1O">
    <property type="method" value="EM"/>
    <property type="resolution" value="3.50 A"/>
    <property type="chains" value="j=1-113"/>
</dbReference>
<dbReference type="PDB" id="7W1P">
    <property type="method" value="EM"/>
    <property type="resolution" value="3.10 A"/>
    <property type="chains" value="j=1-113"/>
</dbReference>
<dbReference type="PDB" id="7W1T">
    <property type="method" value="EM"/>
    <property type="resolution" value="3.00 A"/>
    <property type="chains" value="j=1-115"/>
</dbReference>
<dbReference type="PDB" id="7W1U">
    <property type="method" value="EM"/>
    <property type="resolution" value="3.20 A"/>
    <property type="chains" value="j=1-115"/>
</dbReference>
<dbReference type="PDB" id="7W1V">
    <property type="method" value="EM"/>
    <property type="resolution" value="3.00 A"/>
    <property type="chains" value="j=1-115"/>
</dbReference>
<dbReference type="PDB" id="7W1Z">
    <property type="method" value="EM"/>
    <property type="resolution" value="2.60 A"/>
    <property type="chains" value="j=1-115"/>
</dbReference>
<dbReference type="PDB" id="7W20">
    <property type="method" value="EM"/>
    <property type="resolution" value="3.00 A"/>
    <property type="chains" value="j=1-115"/>
</dbReference>
<dbReference type="PDB" id="7W2K">
    <property type="method" value="EM"/>
    <property type="resolution" value="2.90 A"/>
    <property type="chains" value="j=1-113"/>
</dbReference>
<dbReference type="PDB" id="7W2L">
    <property type="method" value="EM"/>
    <property type="resolution" value="3.00 A"/>
    <property type="chains" value="j=1-113"/>
</dbReference>
<dbReference type="PDB" id="7W2R">
    <property type="method" value="EM"/>
    <property type="resolution" value="2.90 A"/>
    <property type="chains" value="j=1-115"/>
</dbReference>
<dbReference type="PDB" id="7W2U">
    <property type="method" value="EM"/>
    <property type="resolution" value="2.60 A"/>
    <property type="chains" value="j=1-115"/>
</dbReference>
<dbReference type="PDB" id="7W2Y">
    <property type="method" value="EM"/>
    <property type="resolution" value="2.70 A"/>
    <property type="chains" value="j=1-115"/>
</dbReference>
<dbReference type="PDB" id="7W31">
    <property type="method" value="EM"/>
    <property type="resolution" value="3.10 A"/>
    <property type="chains" value="j=1-115"/>
</dbReference>
<dbReference type="PDB" id="7W32">
    <property type="method" value="EM"/>
    <property type="resolution" value="2.90 A"/>
    <property type="chains" value="j=1-115"/>
</dbReference>
<dbReference type="PDB" id="7W35">
    <property type="method" value="EM"/>
    <property type="resolution" value="3.00 A"/>
    <property type="chains" value="j=1-115"/>
</dbReference>
<dbReference type="PDB" id="7W4C">
    <property type="method" value="EM"/>
    <property type="resolution" value="2.70 A"/>
    <property type="chains" value="j=1-115"/>
</dbReference>
<dbReference type="PDB" id="7W4D">
    <property type="method" value="EM"/>
    <property type="resolution" value="3.00 A"/>
    <property type="chains" value="j=1-115"/>
</dbReference>
<dbReference type="PDB" id="7W4E">
    <property type="method" value="EM"/>
    <property type="resolution" value="3.00 A"/>
    <property type="chains" value="j=1-115"/>
</dbReference>
<dbReference type="PDB" id="7W4F">
    <property type="method" value="EM"/>
    <property type="resolution" value="2.70 A"/>
    <property type="chains" value="j=1-115"/>
</dbReference>
<dbReference type="PDB" id="7W4G">
    <property type="method" value="EM"/>
    <property type="resolution" value="3.10 A"/>
    <property type="chains" value="j=1-115"/>
</dbReference>
<dbReference type="PDB" id="7W4J">
    <property type="method" value="EM"/>
    <property type="resolution" value="3.20 A"/>
    <property type="chains" value="j=1-115"/>
</dbReference>
<dbReference type="PDB" id="7W4K">
    <property type="method" value="EM"/>
    <property type="resolution" value="3.20 A"/>
    <property type="chains" value="j=1-115"/>
</dbReference>
<dbReference type="PDB" id="7W4L">
    <property type="method" value="EM"/>
    <property type="resolution" value="3.10 A"/>
    <property type="chains" value="j=1-115"/>
</dbReference>
<dbReference type="PDB" id="7W4M">
    <property type="method" value="EM"/>
    <property type="resolution" value="3.30 A"/>
    <property type="chains" value="j=1-113"/>
</dbReference>
<dbReference type="PDB" id="7W4N">
    <property type="method" value="EM"/>
    <property type="resolution" value="3.00 A"/>
    <property type="chains" value="j=1-115"/>
</dbReference>
<dbReference type="PDB" id="7W4Q">
    <property type="method" value="EM"/>
    <property type="resolution" value="3.30 A"/>
    <property type="chains" value="j=1-115"/>
</dbReference>
<dbReference type="PDB" id="8UD1">
    <property type="method" value="EM"/>
    <property type="resolution" value="2.10 A"/>
    <property type="chains" value="1A=1-115"/>
</dbReference>
<dbReference type="PDB" id="8UEO">
    <property type="method" value="EM"/>
    <property type="resolution" value="3.80 A"/>
    <property type="chains" value="1A=1-115"/>
</dbReference>
<dbReference type="PDB" id="8UEP">
    <property type="method" value="EM"/>
    <property type="resolution" value="3.40 A"/>
    <property type="chains" value="1A=1-115"/>
</dbReference>
<dbReference type="PDB" id="8UEQ">
    <property type="method" value="EM"/>
    <property type="resolution" value="3.40 A"/>
    <property type="chains" value="1A=1-115"/>
</dbReference>
<dbReference type="PDB" id="8UER">
    <property type="method" value="EM"/>
    <property type="resolution" value="3.50 A"/>
    <property type="chains" value="1A=1-115"/>
</dbReference>
<dbReference type="PDB" id="8UES">
    <property type="method" value="EM"/>
    <property type="resolution" value="3.60 A"/>
    <property type="chains" value="1A=1-115"/>
</dbReference>
<dbReference type="PDB" id="8UET">
    <property type="method" value="EM"/>
    <property type="resolution" value="3.70 A"/>
    <property type="chains" value="1A=1-115"/>
</dbReference>
<dbReference type="PDB" id="8UEU">
    <property type="method" value="EM"/>
    <property type="resolution" value="3.60 A"/>
    <property type="chains" value="1A=1-115"/>
</dbReference>
<dbReference type="PDB" id="8UEV">
    <property type="method" value="EM"/>
    <property type="resolution" value="3.70 A"/>
    <property type="chains" value="1A=1-115"/>
</dbReference>
<dbReference type="PDB" id="8UEW">
    <property type="method" value="EM"/>
    <property type="resolution" value="3.60 A"/>
    <property type="chains" value="1A=1-115"/>
</dbReference>
<dbReference type="PDB" id="8UEX">
    <property type="method" value="EM"/>
    <property type="resolution" value="3.90 A"/>
    <property type="chains" value="1A=1-115"/>
</dbReference>
<dbReference type="PDB" id="8UEY">
    <property type="method" value="EM"/>
    <property type="resolution" value="3.60 A"/>
    <property type="chains" value="1A=1-115"/>
</dbReference>
<dbReference type="PDB" id="8UEZ">
    <property type="method" value="EM"/>
    <property type="resolution" value="3.50 A"/>
    <property type="chains" value="1A=1-115"/>
</dbReference>
<dbReference type="PDB" id="8UGH">
    <property type="method" value="EM"/>
    <property type="resolution" value="2.10 A"/>
    <property type="chains" value="1A=1-115"/>
</dbReference>
<dbReference type="PDB" id="8UGI">
    <property type="method" value="EM"/>
    <property type="resolution" value="2.10 A"/>
    <property type="chains" value="1A=1-115"/>
</dbReference>
<dbReference type="PDB" id="8UGJ">
    <property type="method" value="EM"/>
    <property type="resolution" value="2.30 A"/>
    <property type="chains" value="1A=1-115"/>
</dbReference>
<dbReference type="PDB" id="8UGN">
    <property type="method" value="EM"/>
    <property type="resolution" value="2.70 A"/>
    <property type="chains" value="1A/5A=1-115"/>
</dbReference>
<dbReference type="PDB" id="8UGP">
    <property type="method" value="EM"/>
    <property type="resolution" value="2.00 A"/>
    <property type="chains" value="1A=1-115"/>
</dbReference>
<dbReference type="PDB" id="8UGR">
    <property type="method" value="EM"/>
    <property type="resolution" value="6.50 A"/>
    <property type="chains" value="1A/5A=1-115"/>
</dbReference>
<dbReference type="PDBsum" id="5GPN"/>
<dbReference type="PDBsum" id="5GUP"/>
<dbReference type="PDBsum" id="7V2C"/>
<dbReference type="PDBsum" id="7V2D"/>
<dbReference type="PDBsum" id="7V2E"/>
<dbReference type="PDBsum" id="7V2F"/>
<dbReference type="PDBsum" id="7V2H"/>
<dbReference type="PDBsum" id="7V2K"/>
<dbReference type="PDBsum" id="7V2R"/>
<dbReference type="PDBsum" id="7V30"/>
<dbReference type="PDBsum" id="7V31"/>
<dbReference type="PDBsum" id="7V32"/>
<dbReference type="PDBsum" id="7V33"/>
<dbReference type="PDBsum" id="7V3M"/>
<dbReference type="PDBsum" id="7VBL"/>
<dbReference type="PDBsum" id="7VBP"/>
<dbReference type="PDBsum" id="7VC0"/>
<dbReference type="PDBsum" id="7VWL"/>
<dbReference type="PDBsum" id="7VXS"/>
<dbReference type="PDBsum" id="7VY1"/>
<dbReference type="PDBsum" id="7VY9"/>
<dbReference type="PDBsum" id="7VYE"/>
<dbReference type="PDBsum" id="7VYG"/>
<dbReference type="PDBsum" id="7VYI"/>
<dbReference type="PDBsum" id="7VYS"/>
<dbReference type="PDBsum" id="7VZ8"/>
<dbReference type="PDBsum" id="7VZV"/>
<dbReference type="PDBsum" id="7VZW"/>
<dbReference type="PDBsum" id="7W00"/>
<dbReference type="PDBsum" id="7W0H"/>
<dbReference type="PDBsum" id="7W0R"/>
<dbReference type="PDBsum" id="7W0Y"/>
<dbReference type="PDBsum" id="7W1O"/>
<dbReference type="PDBsum" id="7W1P"/>
<dbReference type="PDBsum" id="7W1T"/>
<dbReference type="PDBsum" id="7W1U"/>
<dbReference type="PDBsum" id="7W1V"/>
<dbReference type="PDBsum" id="7W1Z"/>
<dbReference type="PDBsum" id="7W20"/>
<dbReference type="PDBsum" id="7W2K"/>
<dbReference type="PDBsum" id="7W2L"/>
<dbReference type="PDBsum" id="7W2R"/>
<dbReference type="PDBsum" id="7W2U"/>
<dbReference type="PDBsum" id="7W2Y"/>
<dbReference type="PDBsum" id="7W31"/>
<dbReference type="PDBsum" id="7W32"/>
<dbReference type="PDBsum" id="7W35"/>
<dbReference type="PDBsum" id="7W4C"/>
<dbReference type="PDBsum" id="7W4D"/>
<dbReference type="PDBsum" id="7W4E"/>
<dbReference type="PDBsum" id="7W4F"/>
<dbReference type="PDBsum" id="7W4G"/>
<dbReference type="PDBsum" id="7W4J"/>
<dbReference type="PDBsum" id="7W4K"/>
<dbReference type="PDBsum" id="7W4L"/>
<dbReference type="PDBsum" id="7W4M"/>
<dbReference type="PDBsum" id="7W4N"/>
<dbReference type="PDBsum" id="7W4Q"/>
<dbReference type="PDBsum" id="8UD1"/>
<dbReference type="PDBsum" id="8UEO"/>
<dbReference type="PDBsum" id="8UEP"/>
<dbReference type="PDBsum" id="8UEQ"/>
<dbReference type="PDBsum" id="8UER"/>
<dbReference type="PDBsum" id="8UES"/>
<dbReference type="PDBsum" id="8UET"/>
<dbReference type="PDBsum" id="8UEU"/>
<dbReference type="PDBsum" id="8UEV"/>
<dbReference type="PDBsum" id="8UEW"/>
<dbReference type="PDBsum" id="8UEX"/>
<dbReference type="PDBsum" id="8UEY"/>
<dbReference type="PDBsum" id="8UEZ"/>
<dbReference type="PDBsum" id="8UGH"/>
<dbReference type="PDBsum" id="8UGI"/>
<dbReference type="PDBsum" id="8UGJ"/>
<dbReference type="PDBsum" id="8UGN"/>
<dbReference type="PDBsum" id="8UGP"/>
<dbReference type="PDBsum" id="8UGR"/>
<dbReference type="EMDB" id="EMD-31881"/>
<dbReference type="EMDB" id="EMD-31884"/>
<dbReference type="EMDB" id="EMD-31887"/>
<dbReference type="EMDB" id="EMD-32155"/>
<dbReference type="EMDB" id="EMD-32187"/>
<dbReference type="EMDB" id="EMD-32191"/>
<dbReference type="EMDB" id="EMD-32197"/>
<dbReference type="EMDB" id="EMD-32202"/>
<dbReference type="EMDB" id="EMD-32204"/>
<dbReference type="EMDB" id="EMD-32206"/>
<dbReference type="EMDB" id="EMD-32214"/>
<dbReference type="EMDB" id="EMD-32222"/>
<dbReference type="EMDB" id="EMD-32230"/>
<dbReference type="EMDB" id="EMD-32231"/>
<dbReference type="EMDB" id="EMD-32232"/>
<dbReference type="EMDB" id="EMD-32242"/>
<dbReference type="EMDB" id="EMD-32248"/>
<dbReference type="EMDB" id="EMD-32249"/>
<dbReference type="EMDB" id="EMD-32253"/>
<dbReference type="EMDB" id="EMD-32254"/>
<dbReference type="EMDB" id="EMD-32255"/>
<dbReference type="EMDB" id="EMD-32256"/>
<dbReference type="EMDB" id="EMD-32257"/>
<dbReference type="EMDB" id="EMD-32259"/>
<dbReference type="EMDB" id="EMD-32260"/>
<dbReference type="EMDB" id="EMD-32263"/>
<dbReference type="EMDB" id="EMD-32264"/>
<dbReference type="EMDB" id="EMD-32265"/>
<dbReference type="EMDB" id="EMD-32266"/>
<dbReference type="EMDB" id="EMD-32267"/>
<dbReference type="EMDB" id="EMD-32269"/>
<dbReference type="EMDB" id="EMD-32270"/>
<dbReference type="EMDB" id="EMD-32271"/>
<dbReference type="EMDB" id="EMD-32300"/>
<dbReference type="EMDB" id="EMD-32301"/>
<dbReference type="EMDB" id="EMD-32302"/>
<dbReference type="EMDB" id="EMD-32303"/>
<dbReference type="EMDB" id="EMD-32304"/>
<dbReference type="EMDB" id="EMD-32305"/>
<dbReference type="EMDB" id="EMD-32306"/>
<dbReference type="EMDB" id="EMD-32307"/>
<dbReference type="EMDB" id="EMD-32308"/>
<dbReference type="EMDB" id="EMD-32309"/>
<dbReference type="EMDB" id="EMD-32312"/>
<dbReference type="EMDB" id="EMD-42143"/>
<dbReference type="EMDB" id="EMD-42165"/>
<dbReference type="EMDB" id="EMD-42166"/>
<dbReference type="EMDB" id="EMD-42167"/>
<dbReference type="EMDB" id="EMD-42168"/>
<dbReference type="EMDB" id="EMD-42169"/>
<dbReference type="EMDB" id="EMD-42170"/>
<dbReference type="EMDB" id="EMD-42171"/>
<dbReference type="EMDB" id="EMD-42172"/>
<dbReference type="EMDB" id="EMD-42173"/>
<dbReference type="EMDB" id="EMD-42174"/>
<dbReference type="EMDB" id="EMD-42175"/>
<dbReference type="EMDB" id="EMD-42176"/>
<dbReference type="EMDB" id="EMD-42225"/>
<dbReference type="EMDB" id="EMD-42226"/>
<dbReference type="EMDB" id="EMD-42227"/>
<dbReference type="EMDB" id="EMD-42230"/>
<dbReference type="EMDB" id="EMD-42231"/>
<dbReference type="EMDB" id="EMD-42233"/>
<dbReference type="EMDB" id="EMD-9534"/>
<dbReference type="EMDB" id="EMD-9539"/>
<dbReference type="SMR" id="O79880"/>
<dbReference type="FunCoup" id="O79880">
    <property type="interactions" value="110"/>
</dbReference>
<dbReference type="STRING" id="9823.ENSSSCP00000019142"/>
<dbReference type="PaxDb" id="9823-ENSSSCP00000019142"/>
<dbReference type="PeptideAtlas" id="O79880"/>
<dbReference type="Ensembl" id="ENSSSCT00000019679.3">
    <property type="protein sequence ID" value="ENSSSCP00000019142.2"/>
    <property type="gene ID" value="ENSSSCG00000018084.3"/>
</dbReference>
<dbReference type="Ensembl" id="ENSSSCT00070061681.1">
    <property type="protein sequence ID" value="ENSSSCP00070052585.1"/>
    <property type="gene ID" value="ENSSSCG00070030644.1"/>
</dbReference>
<dbReference type="Ensembl" id="ENSSSCT00085000026">
    <property type="protein sequence ID" value="ENSSSCP00085000009"/>
    <property type="gene ID" value="ENSSSCG00085000026"/>
</dbReference>
<dbReference type="Ensembl" id="ENSSSCT00090000026">
    <property type="protein sequence ID" value="ENSSSCP00090000009"/>
    <property type="gene ID" value="ENSSSCG00090000026"/>
</dbReference>
<dbReference type="Ensembl" id="ENSSSCT00105000026">
    <property type="protein sequence ID" value="ENSSSCP00105000009"/>
    <property type="gene ID" value="ENSSSCG00105000026"/>
</dbReference>
<dbReference type="Ensembl" id="ENSSSCT00110000026">
    <property type="protein sequence ID" value="ENSSSCP00110000009"/>
    <property type="gene ID" value="ENSSSCG00110000026"/>
</dbReference>
<dbReference type="Ensembl" id="ENSSSCT00115000026">
    <property type="protein sequence ID" value="ENSSSCP00115000009"/>
    <property type="gene ID" value="ENSSSCG00115000026"/>
</dbReference>
<dbReference type="Ensembl" id="ENSSSCT00130000026">
    <property type="protein sequence ID" value="ENSSSCP00130000009"/>
    <property type="gene ID" value="ENSSSCG00130000026"/>
</dbReference>
<dbReference type="GeneID" id="808508"/>
<dbReference type="KEGG" id="ssc:808508"/>
<dbReference type="CTD" id="4537"/>
<dbReference type="VGNC" id="VGNC:99794">
    <property type="gene designation" value="MT-ND3"/>
</dbReference>
<dbReference type="eggNOG" id="KOG4662">
    <property type="taxonomic scope" value="Eukaryota"/>
</dbReference>
<dbReference type="GeneTree" id="ENSGT00390000011605"/>
<dbReference type="HOGENOM" id="CLU_119549_3_1_1"/>
<dbReference type="InParanoid" id="O79880"/>
<dbReference type="OMA" id="GPRRYNR"/>
<dbReference type="OrthoDB" id="154075at2759"/>
<dbReference type="TreeFam" id="TF343336"/>
<dbReference type="Reactome" id="R-SSC-611105">
    <property type="pathway name" value="Respiratory electron transport"/>
</dbReference>
<dbReference type="Reactome" id="R-SSC-6799198">
    <property type="pathway name" value="Complex I biogenesis"/>
</dbReference>
<dbReference type="Proteomes" id="UP000008227">
    <property type="component" value="Mitochondrion"/>
</dbReference>
<dbReference type="Proteomes" id="UP000314985">
    <property type="component" value="Mitochondrion"/>
</dbReference>
<dbReference type="Proteomes" id="UP000694570">
    <property type="component" value="Unplaced"/>
</dbReference>
<dbReference type="Proteomes" id="UP000694571">
    <property type="component" value="Unplaced"/>
</dbReference>
<dbReference type="Proteomes" id="UP000694720">
    <property type="component" value="Unplaced"/>
</dbReference>
<dbReference type="Proteomes" id="UP000694722">
    <property type="component" value="Unplaced"/>
</dbReference>
<dbReference type="Proteomes" id="UP000694723">
    <property type="component" value="Unplaced"/>
</dbReference>
<dbReference type="Proteomes" id="UP000694724">
    <property type="component" value="Unplaced"/>
</dbReference>
<dbReference type="Proteomes" id="UP000694725">
    <property type="component" value="Unplaced"/>
</dbReference>
<dbReference type="Proteomes" id="UP000694726">
    <property type="component" value="Unplaced"/>
</dbReference>
<dbReference type="Proteomes" id="UP000694727">
    <property type="component" value="Unplaced"/>
</dbReference>
<dbReference type="Proteomes" id="UP000694728">
    <property type="component" value="Unplaced"/>
</dbReference>
<dbReference type="Bgee" id="ENSSSCG00000018084">
    <property type="expression patterns" value="Expressed in hypothalamus and 46 other cell types or tissues"/>
</dbReference>
<dbReference type="ExpressionAtlas" id="O79880">
    <property type="expression patterns" value="baseline"/>
</dbReference>
<dbReference type="GO" id="GO:0005743">
    <property type="term" value="C:mitochondrial inner membrane"/>
    <property type="evidence" value="ECO:0000250"/>
    <property type="project" value="UniProtKB"/>
</dbReference>
<dbReference type="GO" id="GO:0045271">
    <property type="term" value="C:respiratory chain complex I"/>
    <property type="evidence" value="ECO:0000318"/>
    <property type="project" value="GO_Central"/>
</dbReference>
<dbReference type="GO" id="GO:0008137">
    <property type="term" value="F:NADH dehydrogenase (ubiquinone) activity"/>
    <property type="evidence" value="ECO:0000250"/>
    <property type="project" value="UniProtKB"/>
</dbReference>
<dbReference type="GO" id="GO:0006120">
    <property type="term" value="P:mitochondrial electron transport, NADH to ubiquinone"/>
    <property type="evidence" value="ECO:0000250"/>
    <property type="project" value="UniProtKB"/>
</dbReference>
<dbReference type="FunFam" id="1.20.58.1610:FF:000004">
    <property type="entry name" value="NADH-quinone oxidoreductase subunit A"/>
    <property type="match status" value="1"/>
</dbReference>
<dbReference type="Gene3D" id="1.20.58.1610">
    <property type="entry name" value="NADH:ubiquinone/plastoquinone oxidoreductase, chain 3"/>
    <property type="match status" value="1"/>
</dbReference>
<dbReference type="InterPro" id="IPR000440">
    <property type="entry name" value="NADH_UbQ/plastoQ_OxRdtase_su3"/>
</dbReference>
<dbReference type="InterPro" id="IPR038430">
    <property type="entry name" value="NDAH_ubi_oxred_su3_sf"/>
</dbReference>
<dbReference type="PANTHER" id="PTHR11058">
    <property type="entry name" value="NADH-UBIQUINONE OXIDOREDUCTASE CHAIN 3"/>
    <property type="match status" value="1"/>
</dbReference>
<dbReference type="PANTHER" id="PTHR11058:SF9">
    <property type="entry name" value="NADH-UBIQUINONE OXIDOREDUCTASE CHAIN 3"/>
    <property type="match status" value="1"/>
</dbReference>
<dbReference type="Pfam" id="PF00507">
    <property type="entry name" value="Oxidored_q4"/>
    <property type="match status" value="1"/>
</dbReference>
<evidence type="ECO:0000250" key="1">
    <source>
        <dbReference type="UniProtKB" id="P03897"/>
    </source>
</evidence>
<evidence type="ECO:0000250" key="2">
    <source>
        <dbReference type="UniProtKB" id="P03898"/>
    </source>
</evidence>
<evidence type="ECO:0000255" key="3"/>
<evidence type="ECO:0000305" key="4"/>
<evidence type="ECO:0007829" key="5">
    <source>
        <dbReference type="PDB" id="7V2E"/>
    </source>
</evidence>
<evidence type="ECO:0007829" key="6">
    <source>
        <dbReference type="PDB" id="7V2H"/>
    </source>
</evidence>
<evidence type="ECO:0007829" key="7">
    <source>
        <dbReference type="PDB" id="7V2K"/>
    </source>
</evidence>
<evidence type="ECO:0007829" key="8">
    <source>
        <dbReference type="PDB" id="7V32"/>
    </source>
</evidence>
<evidence type="ECO:0007829" key="9">
    <source>
        <dbReference type="PDB" id="7VYS"/>
    </source>
</evidence>
<sequence>MNIMLTLLTNVTLASLLVLIAFWLPQLNAYSEKTSPYECGFDPMGSARLPFSMKFFLVAITFLLFDLEIALLLPLPWASQTNNLKTMLTMALFLLILLAASLAYEWTQKGLEWAE</sequence>
<keyword id="KW-0002">3D-structure</keyword>
<keyword id="KW-0249">Electron transport</keyword>
<keyword id="KW-0472">Membrane</keyword>
<keyword id="KW-0496">Mitochondrion</keyword>
<keyword id="KW-0999">Mitochondrion inner membrane</keyword>
<keyword id="KW-0520">NAD</keyword>
<keyword id="KW-1185">Reference proteome</keyword>
<keyword id="KW-0679">Respiratory chain</keyword>
<keyword id="KW-1278">Translocase</keyword>
<keyword id="KW-0812">Transmembrane</keyword>
<keyword id="KW-1133">Transmembrane helix</keyword>
<keyword id="KW-0813">Transport</keyword>
<keyword id="KW-0830">Ubiquinone</keyword>
<accession>O79880</accession>
<proteinExistence type="evidence at protein level"/>
<protein>
    <recommendedName>
        <fullName evidence="1">NADH-ubiquinone oxidoreductase chain 3</fullName>
        <ecNumber evidence="1">7.1.1.2</ecNumber>
    </recommendedName>
    <alternativeName>
        <fullName>NADH dehydrogenase subunit 3</fullName>
    </alternativeName>
</protein>
<organism>
    <name type="scientific">Sus scrofa</name>
    <name type="common">Pig</name>
    <dbReference type="NCBI Taxonomy" id="9823"/>
    <lineage>
        <taxon>Eukaryota</taxon>
        <taxon>Metazoa</taxon>
        <taxon>Chordata</taxon>
        <taxon>Craniata</taxon>
        <taxon>Vertebrata</taxon>
        <taxon>Euteleostomi</taxon>
        <taxon>Mammalia</taxon>
        <taxon>Eutheria</taxon>
        <taxon>Laurasiatheria</taxon>
        <taxon>Artiodactyla</taxon>
        <taxon>Suina</taxon>
        <taxon>Suidae</taxon>
        <taxon>Sus</taxon>
    </lineage>
</organism>
<reference key="1">
    <citation type="journal article" date="1998" name="J. Mol. Evol.">
        <title>The complete mitochondrial DNA sequence of the pig (Sus scrofa).</title>
        <authorList>
            <person name="Ursing B.M."/>
            <person name="Arnason U."/>
        </authorList>
    </citation>
    <scope>NUCLEOTIDE SEQUENCE [GENOMIC DNA]</scope>
</reference>
<reference key="2">
    <citation type="journal article" date="1999" name="Gene">
        <title>Complete nucleotide sequence of pig (Sus scrofa) mitochondrial genome and dating evolutionary divergence within artiodactyla.</title>
        <authorList>
            <person name="Lin C.S."/>
            <person name="Sun Y.L."/>
            <person name="Liu C.Y."/>
            <person name="Yang P.C."/>
            <person name="Chang L.C."/>
            <person name="Cheng I.C."/>
            <person name="Mao S.J.T."/>
            <person name="Huang M.C."/>
        </authorList>
    </citation>
    <scope>NUCLEOTIDE SEQUENCE [LARGE SCALE GENOMIC DNA]</scope>
    <source>
        <strain>Landrace</strain>
    </source>
</reference>
<name>NU3M_PIG</name>
<comment type="function">
    <text evidence="1">Core subunit of the mitochondrial membrane respiratory chain NADH dehydrogenase (Complex I) which catalyzes electron transfer from NADH through the respiratory chain, using ubiquinone as an electron acceptor. Essential for the catalytic activity of complex I.</text>
</comment>
<comment type="catalytic activity">
    <reaction evidence="1">
        <text>a ubiquinone + NADH + 5 H(+)(in) = a ubiquinol + NAD(+) + 4 H(+)(out)</text>
        <dbReference type="Rhea" id="RHEA:29091"/>
        <dbReference type="Rhea" id="RHEA-COMP:9565"/>
        <dbReference type="Rhea" id="RHEA-COMP:9566"/>
        <dbReference type="ChEBI" id="CHEBI:15378"/>
        <dbReference type="ChEBI" id="CHEBI:16389"/>
        <dbReference type="ChEBI" id="CHEBI:17976"/>
        <dbReference type="ChEBI" id="CHEBI:57540"/>
        <dbReference type="ChEBI" id="CHEBI:57945"/>
        <dbReference type="EC" id="7.1.1.2"/>
    </reaction>
</comment>
<comment type="subunit">
    <text evidence="1">Core subunit of respiratory chain NADH dehydrogenase (Complex I) which is composed of 45 different subunits. Interacts with TMEM186. Interacts with TMEM242 (By similarity).</text>
</comment>
<comment type="subcellular location">
    <subcellularLocation>
        <location evidence="2">Mitochondrion inner membrane</location>
        <topology evidence="3">Multi-pass membrane protein</topology>
    </subcellularLocation>
</comment>
<comment type="similarity">
    <text evidence="4">Belongs to the complex I subunit 3 family.</text>
</comment>
<geneLocation type="mitochondrion"/>